<name>ADPRH_STRPG</name>
<sequence length="270" mass="30239">MPSSFDLLGEMIDLLQTEQLTSYWACPLPNALTKRQDLWRALINQRPALPLSKDYLNLEDTYLDDWRASFVPVSVKDCQKTNYTSLFLYHGDIRYLAVDAIVNAANSELLGCFIPNHGCIDNAIHTFAGSRLRLACQAIMTEQGRKEAIGQAKLTSAYHLPASYIIHTVGPRITKGRHVSPIRADLLARCYRSSLDLAVKAGLTSLAFCSISTGEFGFPKKEAAQIAIKTVLKWQAEHPESKTLTIIFNTFTSEDKALYDTYLQKENNCE</sequence>
<protein>
    <recommendedName>
        <fullName evidence="7">Protein-ADP-ribose hydrolase</fullName>
        <ecNumber evidence="2 3 4">3.2.1.-</ecNumber>
    </recommendedName>
    <alternativeName>
        <fullName evidence="5">SpyMacro</fullName>
    </alternativeName>
    <alternativeName>
        <fullName evidence="6">SpyMacroD</fullName>
    </alternativeName>
</protein>
<proteinExistence type="evidence at protein level"/>
<evidence type="ECO:0000255" key="1">
    <source>
        <dbReference type="PROSITE-ProRule" id="PRU00490"/>
    </source>
</evidence>
<evidence type="ECO:0000269" key="2">
    <source>
    </source>
</evidence>
<evidence type="ECO:0000269" key="3">
    <source>
    </source>
</evidence>
<evidence type="ECO:0000269" key="4">
    <source>
    </source>
</evidence>
<evidence type="ECO:0000303" key="5">
    <source>
    </source>
</evidence>
<evidence type="ECO:0000303" key="6">
    <source>
    </source>
</evidence>
<evidence type="ECO:0000305" key="7">
    <source>
    </source>
</evidence>
<evidence type="ECO:0000305" key="8">
    <source>
    </source>
</evidence>
<evidence type="ECO:0000312" key="9">
    <source>
        <dbReference type="EMBL" id="CAM30196.1"/>
    </source>
</evidence>
<evidence type="ECO:0007744" key="10">
    <source>
        <dbReference type="PDB" id="8RSM"/>
    </source>
</evidence>
<gene>
    <name evidence="9" type="ordered locus">SpyM50868</name>
</gene>
<comment type="function">
    <text evidence="2 3 4">ADP-ribosylhydrolase that specifically reverses the SirTM-mediated mono-ADP-ribosylation at an asparatate residue of GcvH-L (SpyM50867), by releasing ADP-ribose from the target protein (PubMed:26166706, PubMed:39270823). May play a role in the regulation of the response to host-induced oxidative stress (PubMed:26166706). It can also hydrolyze ADP-ribosyl-glutamate bonds and ADP-ribosyl-cysteine bonds (PubMed:33769608, PubMed:39270823). In vitro, it can remove the ADP-ribosyl modification from the human mono-ADP-ribosylated PARP1 E988Q mutant, which is primarily modified on glutamate site with only minor aspartate contribution (PubMed:39270823). It can also hydrolyze the ADP-ribosyl-cysteinyl glycosidic bond of a Cys-ADP-ribosylated synthetic peptide (PubMed:33769608).</text>
</comment>
<comment type="catalytic activity">
    <reaction evidence="2 4">
        <text>4-O-(ADP-D-ribosyl)-L-aspartyl-[protein] + H2O = L-aspartyl-[protein] + ADP-D-ribose + H(+)</text>
        <dbReference type="Rhea" id="RHEA:54428"/>
        <dbReference type="Rhea" id="RHEA-COMP:9867"/>
        <dbReference type="Rhea" id="RHEA-COMP:13832"/>
        <dbReference type="ChEBI" id="CHEBI:15377"/>
        <dbReference type="ChEBI" id="CHEBI:15378"/>
        <dbReference type="ChEBI" id="CHEBI:29961"/>
        <dbReference type="ChEBI" id="CHEBI:57967"/>
        <dbReference type="ChEBI" id="CHEBI:138102"/>
    </reaction>
    <physiologicalReaction direction="left-to-right" evidence="2">
        <dbReference type="Rhea" id="RHEA:54429"/>
    </physiologicalReaction>
</comment>
<comment type="catalytic activity">
    <reaction evidence="4">
        <text>5-O-(ADP-D-ribosyl)-L-glutamyl-[protein] + H2O = L-glutamyl-[protein] + ADP-D-ribose + H(+)</text>
        <dbReference type="Rhea" id="RHEA:58248"/>
        <dbReference type="Rhea" id="RHEA-COMP:10208"/>
        <dbReference type="Rhea" id="RHEA-COMP:15089"/>
        <dbReference type="ChEBI" id="CHEBI:15377"/>
        <dbReference type="ChEBI" id="CHEBI:15378"/>
        <dbReference type="ChEBI" id="CHEBI:29973"/>
        <dbReference type="ChEBI" id="CHEBI:57967"/>
        <dbReference type="ChEBI" id="CHEBI:142540"/>
    </reaction>
</comment>
<comment type="catalytic activity">
    <reaction evidence="3">
        <text>S-(ADP-D-ribosyl)-L-cysteinyl-[protein] + H2O = ADP-D-ribose + L-cysteinyl-[protein]</text>
        <dbReference type="Rhea" id="RHEA:58240"/>
        <dbReference type="Rhea" id="RHEA-COMP:10131"/>
        <dbReference type="Rhea" id="RHEA-COMP:14624"/>
        <dbReference type="ChEBI" id="CHEBI:15377"/>
        <dbReference type="ChEBI" id="CHEBI:29950"/>
        <dbReference type="ChEBI" id="CHEBI:57967"/>
        <dbReference type="ChEBI" id="CHEBI:140607"/>
    </reaction>
</comment>
<comment type="cofactor">
    <cofactor evidence="4">
        <name>Zn(2+)</name>
        <dbReference type="ChEBI" id="CHEBI:29105"/>
    </cofactor>
    <text evidence="4">Binds 1 Zn(2+) ion per subunit.</text>
</comment>
<comment type="subunit">
    <text evidence="2 4">Monomer (PubMed:39270823). Interacts with the lipoylated form of GcvH-L (PubMed:26166706).</text>
</comment>
<comment type="similarity">
    <text evidence="8">Belongs to the MacroD-type family. Zn-Macro subfamily.</text>
</comment>
<reference key="1">
    <citation type="journal article" date="2007" name="J. Bacteriol.">
        <title>Complete genome of acute rheumatic fever-associated serotype M5 Streptococcus pyogenes strain Manfredo.</title>
        <authorList>
            <person name="Holden M.T.G."/>
            <person name="Scott A."/>
            <person name="Cherevach I."/>
            <person name="Chillingworth T."/>
            <person name="Churcher C."/>
            <person name="Cronin A."/>
            <person name="Dowd L."/>
            <person name="Feltwell T."/>
            <person name="Hamlin N."/>
            <person name="Holroyd S."/>
            <person name="Jagels K."/>
            <person name="Moule S."/>
            <person name="Mungall K."/>
            <person name="Quail M.A."/>
            <person name="Price C."/>
            <person name="Rabbinowitsch E."/>
            <person name="Sharp S."/>
            <person name="Skelton J."/>
            <person name="Whitehead S."/>
            <person name="Barrell B.G."/>
            <person name="Kehoe M."/>
            <person name="Parkhill J."/>
        </authorList>
    </citation>
    <scope>NUCLEOTIDE SEQUENCE [LARGE SCALE GENOMIC DNA]</scope>
    <source>
        <strain>Manfredo</strain>
    </source>
</reference>
<reference key="2">
    <citation type="journal article" date="2015" name="Mol. Cell">
        <title>Identification of a class of protein ADP-ribosylating sirtuins in microbial pathogens.</title>
        <authorList>
            <person name="Rack J.G."/>
            <person name="Morra R."/>
            <person name="Barkauskaite E."/>
            <person name="Kraehenbuehl R."/>
            <person name="Ariza A."/>
            <person name="Qu Y."/>
            <person name="Ortmayer M."/>
            <person name="Leidecker O."/>
            <person name="Cameron D.R."/>
            <person name="Matic I."/>
            <person name="Peleg A.Y."/>
            <person name="Leys D."/>
            <person name="Traven A."/>
            <person name="Ahel I."/>
        </authorList>
    </citation>
    <scope>FUNCTION</scope>
    <scope>CATALYTIC ACTIVITY</scope>
    <scope>INTERACTION WITH GCVH-L</scope>
    <source>
        <strain>Manfredo</strain>
    </source>
</reference>
<reference key="3">
    <citation type="journal article" date="2021" name="Chemistry">
        <title>Molecular Tools for the Study of ADP-Ribosylation: A Unified and Versatile Method to Synthesise Native Mono-ADP-Ribosylated Peptides.</title>
        <authorList>
            <person name="Voorneveld J."/>
            <person name="Rack J.G.M."/>
            <person name="van Gijlswijk L."/>
            <person name="Meeuwenoord N.J."/>
            <person name="Liu Q."/>
            <person name="Overkleeft H.S."/>
            <person name="van der Marel G.A."/>
            <person name="Ahel I."/>
            <person name="Filippov D.V."/>
        </authorList>
    </citation>
    <scope>FUNCTION</scope>
    <scope>CATALYTIC ACTIVITY</scope>
</reference>
<reference evidence="10" key="4">
    <citation type="journal article" date="2024" name="J. Biol. Chem.">
        <title>Evolutionary and molecular basis of ADP-ribosylation reversal by zinc-dependent macrodomains.</title>
        <authorList>
            <person name="Ariza A."/>
            <person name="Liu Q."/>
            <person name="Cowieson N.P."/>
            <person name="Ahel I."/>
            <person name="Filippov D.V."/>
            <person name="Rack J.G.M."/>
        </authorList>
    </citation>
    <scope>X-RAY CRYSTALLOGRAPHY (1.87 ANGSTROMS) IN COMPLEX WITH ZN(2+) AND ADP-RIBOSE</scope>
    <scope>FUNCTION</scope>
    <scope>CATALYTIC ACTIVITY</scope>
    <scope>COFACTOR</scope>
    <scope>SUBUNIT</scope>
    <scope>MUTAGENESIS OF HIS-117</scope>
</reference>
<keyword id="KW-0002">3D-structure</keyword>
<keyword id="KW-0326">Glycosidase</keyword>
<keyword id="KW-0378">Hydrolase</keyword>
<keyword id="KW-0479">Metal-binding</keyword>
<keyword id="KW-0862">Zinc</keyword>
<organism>
    <name type="scientific">Streptococcus pyogenes serotype M5 (strain Manfredo)</name>
    <dbReference type="NCBI Taxonomy" id="160491"/>
    <lineage>
        <taxon>Bacteria</taxon>
        <taxon>Bacillati</taxon>
        <taxon>Bacillota</taxon>
        <taxon>Bacilli</taxon>
        <taxon>Lactobacillales</taxon>
        <taxon>Streptococcaceae</taxon>
        <taxon>Streptococcus</taxon>
    </lineage>
</organism>
<feature type="chain" id="PRO_0000435343" description="Protein-ADP-ribose hydrolase">
    <location>
        <begin position="1"/>
        <end position="270"/>
    </location>
</feature>
<feature type="domain" description="Macro" evidence="1">
    <location>
        <begin position="73"/>
        <end position="267"/>
    </location>
</feature>
<feature type="binding site" evidence="4 10">
    <location>
        <position position="92"/>
    </location>
    <ligand>
        <name>ADP-D-ribose</name>
        <dbReference type="ChEBI" id="CHEBI:57967"/>
    </ligand>
</feature>
<feature type="binding site" evidence="4 10">
    <location>
        <position position="93"/>
    </location>
    <ligand>
        <name>ADP-D-ribose</name>
        <dbReference type="ChEBI" id="CHEBI:57967"/>
    </ligand>
</feature>
<feature type="binding site" evidence="4 10">
    <location>
        <position position="106"/>
    </location>
    <ligand>
        <name>ADP-D-ribose</name>
        <dbReference type="ChEBI" id="CHEBI:57967"/>
    </ligand>
</feature>
<feature type="binding site" evidence="4 10">
    <location>
        <position position="112"/>
    </location>
    <ligand>
        <name>Zn(2+)</name>
        <dbReference type="ChEBI" id="CHEBI:29105"/>
    </ligand>
</feature>
<feature type="binding site" evidence="4 10">
    <location>
        <position position="117"/>
    </location>
    <ligand>
        <name>Zn(2+)</name>
        <dbReference type="ChEBI" id="CHEBI:29105"/>
    </ligand>
</feature>
<feature type="binding site" evidence="4 10">
    <location>
        <position position="119"/>
    </location>
    <ligand>
        <name>ADP-D-ribose</name>
        <dbReference type="ChEBI" id="CHEBI:57967"/>
    </ligand>
</feature>
<feature type="binding site" evidence="4 10">
    <location>
        <position position="119"/>
    </location>
    <ligand>
        <name>Zn(2+)</name>
        <dbReference type="ChEBI" id="CHEBI:29105"/>
    </ligand>
</feature>
<feature type="binding site" evidence="4 10">
    <location>
        <position position="120"/>
    </location>
    <ligand>
        <name>ADP-D-ribose</name>
        <dbReference type="ChEBI" id="CHEBI:57967"/>
    </ligand>
</feature>
<feature type="binding site" evidence="4 10">
    <location>
        <position position="121"/>
    </location>
    <ligand>
        <name>ADP-D-ribose</name>
        <dbReference type="ChEBI" id="CHEBI:57967"/>
    </ligand>
</feature>
<feature type="binding site" evidence="4 10">
    <location>
        <position position="212"/>
    </location>
    <ligand>
        <name>ADP-D-ribose</name>
        <dbReference type="ChEBI" id="CHEBI:57967"/>
    </ligand>
</feature>
<feature type="binding site" evidence="4 10">
    <location>
        <position position="213"/>
    </location>
    <ligand>
        <name>ADP-D-ribose</name>
        <dbReference type="ChEBI" id="CHEBI:57967"/>
    </ligand>
</feature>
<feature type="binding site" evidence="4 10">
    <location>
        <position position="214"/>
    </location>
    <ligand>
        <name>ADP-D-ribose</name>
        <dbReference type="ChEBI" id="CHEBI:57967"/>
    </ligand>
</feature>
<feature type="binding site" evidence="4 10">
    <location>
        <position position="215"/>
    </location>
    <ligand>
        <name>ADP-D-ribose</name>
        <dbReference type="ChEBI" id="CHEBI:57967"/>
    </ligand>
</feature>
<feature type="binding site" evidence="4 10">
    <location>
        <position position="216"/>
    </location>
    <ligand>
        <name>ADP-D-ribose</name>
        <dbReference type="ChEBI" id="CHEBI:57967"/>
    </ligand>
</feature>
<feature type="mutagenesis site" description="Loss of hydrolase activity with GcvH-L or PARP1 E988Q as substrate." evidence="4">
    <original>H</original>
    <variation>Y</variation>
    <location>
        <position position="117"/>
    </location>
</feature>
<accession>P0DN70</accession>
<dbReference type="EC" id="3.2.1.-" evidence="2 3 4"/>
<dbReference type="EMBL" id="AM295007">
    <property type="protein sequence ID" value="CAM30196.1"/>
    <property type="molecule type" value="Genomic_DNA"/>
</dbReference>
<dbReference type="RefSeq" id="WP_011888850.1">
    <property type="nucleotide sequence ID" value="NC_009332.1"/>
</dbReference>
<dbReference type="PDB" id="8RSM">
    <property type="method" value="X-ray"/>
    <property type="resolution" value="1.87 A"/>
    <property type="chains" value="A=1-270"/>
</dbReference>
<dbReference type="PDBsum" id="8RSM"/>
<dbReference type="SASBDB" id="P0DN70"/>
<dbReference type="SMR" id="P0DN70"/>
<dbReference type="KEGG" id="spf:SpyM50868"/>
<dbReference type="HOGENOM" id="CLU_046550_2_1_9"/>
<dbReference type="GO" id="GO:0004553">
    <property type="term" value="F:hydrolase activity, hydrolyzing O-glycosyl compounds"/>
    <property type="evidence" value="ECO:0000314"/>
    <property type="project" value="UniProtKB"/>
</dbReference>
<dbReference type="GO" id="GO:0004649">
    <property type="term" value="F:poly(ADP-ribose) glycohydrolase activity"/>
    <property type="evidence" value="ECO:0000314"/>
    <property type="project" value="UniProtKB"/>
</dbReference>
<dbReference type="GO" id="GO:0051725">
    <property type="term" value="P:protein de-ADP-ribosylation"/>
    <property type="evidence" value="ECO:0000314"/>
    <property type="project" value="UniProtKB"/>
</dbReference>
<dbReference type="CDD" id="cd02908">
    <property type="entry name" value="Macro_OAADPr_deacetylase"/>
    <property type="match status" value="1"/>
</dbReference>
<dbReference type="FunFam" id="3.40.220.10:FF:000018">
    <property type="entry name" value="Protein-ADP-ribose hydrolase"/>
    <property type="match status" value="1"/>
</dbReference>
<dbReference type="Gene3D" id="3.40.220.10">
    <property type="entry name" value="Leucine Aminopeptidase, subunit E, domain 1"/>
    <property type="match status" value="1"/>
</dbReference>
<dbReference type="InterPro" id="IPR002589">
    <property type="entry name" value="Macro_dom"/>
</dbReference>
<dbReference type="InterPro" id="IPR043472">
    <property type="entry name" value="Macro_dom-like"/>
</dbReference>
<dbReference type="NCBIfam" id="NF003163">
    <property type="entry name" value="PRK04143.1"/>
    <property type="match status" value="1"/>
</dbReference>
<dbReference type="PANTHER" id="PTHR11106:SF121">
    <property type="entry name" value="ADP-RIBOSE 1''-PHOSPHATE PHOSPHATASE"/>
    <property type="match status" value="1"/>
</dbReference>
<dbReference type="PANTHER" id="PTHR11106">
    <property type="entry name" value="GANGLIOSIDE INDUCED DIFFERENTIATION ASSOCIATED PROTEIN 2-RELATED"/>
    <property type="match status" value="1"/>
</dbReference>
<dbReference type="Pfam" id="PF01661">
    <property type="entry name" value="Macro"/>
    <property type="match status" value="1"/>
</dbReference>
<dbReference type="SMART" id="SM00506">
    <property type="entry name" value="A1pp"/>
    <property type="match status" value="1"/>
</dbReference>
<dbReference type="SUPFAM" id="SSF52949">
    <property type="entry name" value="Macro domain-like"/>
    <property type="match status" value="1"/>
</dbReference>
<dbReference type="PROSITE" id="PS51154">
    <property type="entry name" value="MACRO"/>
    <property type="match status" value="1"/>
</dbReference>